<feature type="chain" id="PRO_0000124934" description="Large ribosomal subunit protein uL5">
    <location>
        <begin position="1"/>
        <end position="181"/>
    </location>
</feature>
<keyword id="KW-1185">Reference proteome</keyword>
<keyword id="KW-0687">Ribonucleoprotein</keyword>
<keyword id="KW-0689">Ribosomal protein</keyword>
<keyword id="KW-0694">RNA-binding</keyword>
<keyword id="KW-0699">rRNA-binding</keyword>
<keyword id="KW-0820">tRNA-binding</keyword>
<comment type="function">
    <text evidence="1">This is one of the proteins that bind and probably mediate the attachment of the 5S RNA into the large ribosomal subunit, where it forms part of the central protuberance. In the 70S ribosome it contacts protein S13 of the 30S subunit (bridge B1b), connecting the 2 subunits; this bridge is implicated in subunit movement. Contacts the P site tRNA; the 5S rRNA and some of its associated proteins might help stabilize positioning of ribosome-bound tRNAs.</text>
</comment>
<comment type="subunit">
    <text evidence="1">Part of the 50S ribosomal subunit; part of the 5S rRNA/L5/L18/L25 subcomplex. Contacts the 5S rRNA and the P site tRNA. Forms a bridge to the 30S subunit in the 70S ribosome.</text>
</comment>
<comment type="similarity">
    <text evidence="1">Belongs to the universal ribosomal protein uL5 family.</text>
</comment>
<protein>
    <recommendedName>
        <fullName evidence="1">Large ribosomal subunit protein uL5</fullName>
    </recommendedName>
    <alternativeName>
        <fullName evidence="2">50S ribosomal protein L5</fullName>
    </alternativeName>
</protein>
<name>RL5_HELHP</name>
<evidence type="ECO:0000255" key="1">
    <source>
        <dbReference type="HAMAP-Rule" id="MF_01333"/>
    </source>
</evidence>
<evidence type="ECO:0000305" key="2"/>
<gene>
    <name evidence="1" type="primary">rplE</name>
    <name type="ordered locus">HH_1390</name>
</gene>
<dbReference type="EMBL" id="AE017125">
    <property type="protein sequence ID" value="AAP77987.1"/>
    <property type="molecule type" value="Genomic_DNA"/>
</dbReference>
<dbReference type="RefSeq" id="WP_011116230.1">
    <property type="nucleotide sequence ID" value="NC_004917.1"/>
</dbReference>
<dbReference type="SMR" id="Q7VGD2"/>
<dbReference type="STRING" id="235279.HH_1390"/>
<dbReference type="KEGG" id="hhe:HH_1390"/>
<dbReference type="eggNOG" id="COG0094">
    <property type="taxonomic scope" value="Bacteria"/>
</dbReference>
<dbReference type="HOGENOM" id="CLU_061015_2_1_7"/>
<dbReference type="OrthoDB" id="9806626at2"/>
<dbReference type="Proteomes" id="UP000002495">
    <property type="component" value="Chromosome"/>
</dbReference>
<dbReference type="GO" id="GO:1990904">
    <property type="term" value="C:ribonucleoprotein complex"/>
    <property type="evidence" value="ECO:0007669"/>
    <property type="project" value="UniProtKB-KW"/>
</dbReference>
<dbReference type="GO" id="GO:0005840">
    <property type="term" value="C:ribosome"/>
    <property type="evidence" value="ECO:0007669"/>
    <property type="project" value="UniProtKB-KW"/>
</dbReference>
<dbReference type="GO" id="GO:0019843">
    <property type="term" value="F:rRNA binding"/>
    <property type="evidence" value="ECO:0007669"/>
    <property type="project" value="UniProtKB-UniRule"/>
</dbReference>
<dbReference type="GO" id="GO:0003735">
    <property type="term" value="F:structural constituent of ribosome"/>
    <property type="evidence" value="ECO:0007669"/>
    <property type="project" value="InterPro"/>
</dbReference>
<dbReference type="GO" id="GO:0000049">
    <property type="term" value="F:tRNA binding"/>
    <property type="evidence" value="ECO:0007669"/>
    <property type="project" value="UniProtKB-UniRule"/>
</dbReference>
<dbReference type="GO" id="GO:0006412">
    <property type="term" value="P:translation"/>
    <property type="evidence" value="ECO:0007669"/>
    <property type="project" value="UniProtKB-UniRule"/>
</dbReference>
<dbReference type="FunFam" id="3.30.1440.10:FF:000001">
    <property type="entry name" value="50S ribosomal protein L5"/>
    <property type="match status" value="1"/>
</dbReference>
<dbReference type="Gene3D" id="3.30.1440.10">
    <property type="match status" value="1"/>
</dbReference>
<dbReference type="HAMAP" id="MF_01333_B">
    <property type="entry name" value="Ribosomal_uL5_B"/>
    <property type="match status" value="1"/>
</dbReference>
<dbReference type="InterPro" id="IPR002132">
    <property type="entry name" value="Ribosomal_uL5"/>
</dbReference>
<dbReference type="InterPro" id="IPR020930">
    <property type="entry name" value="Ribosomal_uL5_bac-type"/>
</dbReference>
<dbReference type="InterPro" id="IPR031309">
    <property type="entry name" value="Ribosomal_uL5_C"/>
</dbReference>
<dbReference type="InterPro" id="IPR020929">
    <property type="entry name" value="Ribosomal_uL5_CS"/>
</dbReference>
<dbReference type="InterPro" id="IPR022803">
    <property type="entry name" value="Ribosomal_uL5_dom_sf"/>
</dbReference>
<dbReference type="InterPro" id="IPR031310">
    <property type="entry name" value="Ribosomal_uL5_N"/>
</dbReference>
<dbReference type="NCBIfam" id="NF000585">
    <property type="entry name" value="PRK00010.1"/>
    <property type="match status" value="1"/>
</dbReference>
<dbReference type="PANTHER" id="PTHR11994">
    <property type="entry name" value="60S RIBOSOMAL PROTEIN L11-RELATED"/>
    <property type="match status" value="1"/>
</dbReference>
<dbReference type="Pfam" id="PF00281">
    <property type="entry name" value="Ribosomal_L5"/>
    <property type="match status" value="1"/>
</dbReference>
<dbReference type="Pfam" id="PF00673">
    <property type="entry name" value="Ribosomal_L5_C"/>
    <property type="match status" value="1"/>
</dbReference>
<dbReference type="PIRSF" id="PIRSF002161">
    <property type="entry name" value="Ribosomal_L5"/>
    <property type="match status" value="1"/>
</dbReference>
<dbReference type="SUPFAM" id="SSF55282">
    <property type="entry name" value="RL5-like"/>
    <property type="match status" value="1"/>
</dbReference>
<dbReference type="PROSITE" id="PS00358">
    <property type="entry name" value="RIBOSOMAL_L5"/>
    <property type="match status" value="1"/>
</dbReference>
<accession>Q7VGD2</accession>
<proteinExistence type="inferred from homology"/>
<reference key="1">
    <citation type="journal article" date="2003" name="Proc. Natl. Acad. Sci. U.S.A.">
        <title>The complete genome sequence of the carcinogenic bacterium Helicobacter hepaticus.</title>
        <authorList>
            <person name="Suerbaum S."/>
            <person name="Josenhans C."/>
            <person name="Sterzenbach T."/>
            <person name="Drescher B."/>
            <person name="Brandt P."/>
            <person name="Bell M."/>
            <person name="Droege M."/>
            <person name="Fartmann B."/>
            <person name="Fischer H.-P."/>
            <person name="Ge Z."/>
            <person name="Hoerster A."/>
            <person name="Holland R."/>
            <person name="Klein K."/>
            <person name="Koenig J."/>
            <person name="Macko L."/>
            <person name="Mendz G.L."/>
            <person name="Nyakatura G."/>
            <person name="Schauer D.B."/>
            <person name="Shen Z."/>
            <person name="Weber J."/>
            <person name="Frosch M."/>
            <person name="Fox J.G."/>
        </authorList>
    </citation>
    <scope>NUCLEOTIDE SEQUENCE [LARGE SCALE GENOMIC DNA]</scope>
    <source>
        <strain>ATCC 51449 / 3B1</strain>
    </source>
</reference>
<organism>
    <name type="scientific">Helicobacter hepaticus (strain ATCC 51449 / 3B1)</name>
    <dbReference type="NCBI Taxonomy" id="235279"/>
    <lineage>
        <taxon>Bacteria</taxon>
        <taxon>Pseudomonadati</taxon>
        <taxon>Campylobacterota</taxon>
        <taxon>Epsilonproteobacteria</taxon>
        <taxon>Campylobacterales</taxon>
        <taxon>Helicobacteraceae</taxon>
        <taxon>Helicobacter</taxon>
    </lineage>
</organism>
<sequence length="181" mass="20297">MFALREKYKNEIISQLKSELNMSNPMLLPKLEKIVISVGAGDYAKDSKIMQNIADTISLIAGQKAVITLAKKSVAGFKMREGMPMGVKVTLRGKMMYNFLEKLIVIALPRVKDFRGLKRNGFDGRGNYSFGLNEQLMFPEVVYDDIMVTHGMNITIVTSTHSDKEAFKLLELLGMPFAKGR</sequence>